<organism>
    <name type="scientific">Acinetobacter baylyi (strain ATCC 33305 / BD413 / ADP1)</name>
    <dbReference type="NCBI Taxonomy" id="62977"/>
    <lineage>
        <taxon>Bacteria</taxon>
        <taxon>Pseudomonadati</taxon>
        <taxon>Pseudomonadota</taxon>
        <taxon>Gammaproteobacteria</taxon>
        <taxon>Moraxellales</taxon>
        <taxon>Moraxellaceae</taxon>
        <taxon>Acinetobacter</taxon>
    </lineage>
</organism>
<keyword id="KW-0686">Riboflavin biosynthesis</keyword>
<keyword id="KW-0808">Transferase</keyword>
<proteinExistence type="inferred from homology"/>
<evidence type="ECO:0000255" key="1">
    <source>
        <dbReference type="HAMAP-Rule" id="MF_00178"/>
    </source>
</evidence>
<accession>Q6F6V3</accession>
<sequence length="156" mass="16421">MAIRRIEGLLHLASEGRYAILVGRFNSFVVEHLLEGAIDTLKRHGVSEDNITVAYAPGAWELPIVAKKLAASDKFDAIIALGAVIRGSTPHFDFVAGECAKGLGVVALESSLPVINGVLTTDSIEQAIERSGTKAGNKGSEAALTAIEMVNLLKAI</sequence>
<protein>
    <recommendedName>
        <fullName evidence="1">6,7-dimethyl-8-ribityllumazine synthase</fullName>
        <shortName evidence="1">DMRL synthase</shortName>
        <shortName evidence="1">LS</shortName>
        <shortName evidence="1">Lumazine synthase</shortName>
        <ecNumber evidence="1">2.5.1.78</ecNumber>
    </recommendedName>
</protein>
<gene>
    <name evidence="1" type="primary">ribH</name>
    <name type="ordered locus">ACIAD3571</name>
</gene>
<name>RISB_ACIAD</name>
<comment type="function">
    <text evidence="1">Catalyzes the formation of 6,7-dimethyl-8-ribityllumazine by condensation of 5-amino-6-(D-ribitylamino)uracil with 3,4-dihydroxy-2-butanone 4-phosphate. This is the penultimate step in the biosynthesis of riboflavin.</text>
</comment>
<comment type="catalytic activity">
    <reaction evidence="1">
        <text>(2S)-2-hydroxy-3-oxobutyl phosphate + 5-amino-6-(D-ribitylamino)uracil = 6,7-dimethyl-8-(1-D-ribityl)lumazine + phosphate + 2 H2O + H(+)</text>
        <dbReference type="Rhea" id="RHEA:26152"/>
        <dbReference type="ChEBI" id="CHEBI:15377"/>
        <dbReference type="ChEBI" id="CHEBI:15378"/>
        <dbReference type="ChEBI" id="CHEBI:15934"/>
        <dbReference type="ChEBI" id="CHEBI:43474"/>
        <dbReference type="ChEBI" id="CHEBI:58201"/>
        <dbReference type="ChEBI" id="CHEBI:58830"/>
        <dbReference type="EC" id="2.5.1.78"/>
    </reaction>
</comment>
<comment type="pathway">
    <text evidence="1">Cofactor biosynthesis; riboflavin biosynthesis; riboflavin from 2-hydroxy-3-oxobutyl phosphate and 5-amino-6-(D-ribitylamino)uracil: step 1/2.</text>
</comment>
<comment type="subunit">
    <text evidence="1">Forms an icosahedral capsid composed of 60 subunits, arranged as a dodecamer of pentamers.</text>
</comment>
<comment type="similarity">
    <text evidence="1">Belongs to the DMRL synthase family.</text>
</comment>
<feature type="chain" id="PRO_1000040356" description="6,7-dimethyl-8-ribityllumazine synthase">
    <location>
        <begin position="1"/>
        <end position="156"/>
    </location>
</feature>
<feature type="active site" description="Proton donor" evidence="1">
    <location>
        <position position="91"/>
    </location>
</feature>
<feature type="binding site" evidence="1">
    <location>
        <position position="25"/>
    </location>
    <ligand>
        <name>5-amino-6-(D-ribitylamino)uracil</name>
        <dbReference type="ChEBI" id="CHEBI:15934"/>
    </ligand>
</feature>
<feature type="binding site" evidence="1">
    <location>
        <begin position="59"/>
        <end position="61"/>
    </location>
    <ligand>
        <name>5-amino-6-(D-ribitylamino)uracil</name>
        <dbReference type="ChEBI" id="CHEBI:15934"/>
    </ligand>
</feature>
<feature type="binding site" evidence="1">
    <location>
        <begin position="83"/>
        <end position="85"/>
    </location>
    <ligand>
        <name>5-amino-6-(D-ribitylamino)uracil</name>
        <dbReference type="ChEBI" id="CHEBI:15934"/>
    </ligand>
</feature>
<feature type="binding site" evidence="1">
    <location>
        <begin position="88"/>
        <end position="89"/>
    </location>
    <ligand>
        <name>(2S)-2-hydroxy-3-oxobutyl phosphate</name>
        <dbReference type="ChEBI" id="CHEBI:58830"/>
    </ligand>
</feature>
<feature type="binding site" evidence="1">
    <location>
        <position position="116"/>
    </location>
    <ligand>
        <name>5-amino-6-(D-ribitylamino)uracil</name>
        <dbReference type="ChEBI" id="CHEBI:15934"/>
    </ligand>
</feature>
<feature type="binding site" evidence="1">
    <location>
        <position position="130"/>
    </location>
    <ligand>
        <name>(2S)-2-hydroxy-3-oxobutyl phosphate</name>
        <dbReference type="ChEBI" id="CHEBI:58830"/>
    </ligand>
</feature>
<dbReference type="EC" id="2.5.1.78" evidence="1"/>
<dbReference type="EMBL" id="CR543861">
    <property type="protein sequence ID" value="CAG70212.1"/>
    <property type="molecule type" value="Genomic_DNA"/>
</dbReference>
<dbReference type="SMR" id="Q6F6V3"/>
<dbReference type="STRING" id="202950.GCA_001485005_01645"/>
<dbReference type="GeneID" id="45235744"/>
<dbReference type="KEGG" id="aci:ACIAD3571"/>
<dbReference type="eggNOG" id="COG0054">
    <property type="taxonomic scope" value="Bacteria"/>
</dbReference>
<dbReference type="HOGENOM" id="CLU_089358_1_1_6"/>
<dbReference type="OrthoDB" id="9809709at2"/>
<dbReference type="BioCyc" id="ASP62977:ACIAD_RS16155-MONOMER"/>
<dbReference type="UniPathway" id="UPA00275">
    <property type="reaction ID" value="UER00404"/>
</dbReference>
<dbReference type="Proteomes" id="UP000000430">
    <property type="component" value="Chromosome"/>
</dbReference>
<dbReference type="GO" id="GO:0005829">
    <property type="term" value="C:cytosol"/>
    <property type="evidence" value="ECO:0007669"/>
    <property type="project" value="TreeGrafter"/>
</dbReference>
<dbReference type="GO" id="GO:0009349">
    <property type="term" value="C:riboflavin synthase complex"/>
    <property type="evidence" value="ECO:0007669"/>
    <property type="project" value="InterPro"/>
</dbReference>
<dbReference type="GO" id="GO:0000906">
    <property type="term" value="F:6,7-dimethyl-8-ribityllumazine synthase activity"/>
    <property type="evidence" value="ECO:0007669"/>
    <property type="project" value="UniProtKB-UniRule"/>
</dbReference>
<dbReference type="GO" id="GO:0009231">
    <property type="term" value="P:riboflavin biosynthetic process"/>
    <property type="evidence" value="ECO:0007669"/>
    <property type="project" value="UniProtKB-UniRule"/>
</dbReference>
<dbReference type="CDD" id="cd09209">
    <property type="entry name" value="Lumazine_synthase-I"/>
    <property type="match status" value="1"/>
</dbReference>
<dbReference type="FunFam" id="3.40.50.960:FF:000001">
    <property type="entry name" value="6,7-dimethyl-8-ribityllumazine synthase"/>
    <property type="match status" value="1"/>
</dbReference>
<dbReference type="Gene3D" id="3.40.50.960">
    <property type="entry name" value="Lumazine/riboflavin synthase"/>
    <property type="match status" value="1"/>
</dbReference>
<dbReference type="HAMAP" id="MF_00178">
    <property type="entry name" value="Lumazine_synth"/>
    <property type="match status" value="1"/>
</dbReference>
<dbReference type="InterPro" id="IPR034964">
    <property type="entry name" value="LS"/>
</dbReference>
<dbReference type="InterPro" id="IPR002180">
    <property type="entry name" value="LS/RS"/>
</dbReference>
<dbReference type="InterPro" id="IPR036467">
    <property type="entry name" value="LS/RS_sf"/>
</dbReference>
<dbReference type="NCBIfam" id="TIGR00114">
    <property type="entry name" value="lumazine-synth"/>
    <property type="match status" value="1"/>
</dbReference>
<dbReference type="NCBIfam" id="NF000812">
    <property type="entry name" value="PRK00061.1-4"/>
    <property type="match status" value="1"/>
</dbReference>
<dbReference type="PANTHER" id="PTHR21058:SF0">
    <property type="entry name" value="6,7-DIMETHYL-8-RIBITYLLUMAZINE SYNTHASE"/>
    <property type="match status" value="1"/>
</dbReference>
<dbReference type="PANTHER" id="PTHR21058">
    <property type="entry name" value="6,7-DIMETHYL-8-RIBITYLLUMAZINE SYNTHASE DMRL SYNTHASE LUMAZINE SYNTHASE"/>
    <property type="match status" value="1"/>
</dbReference>
<dbReference type="Pfam" id="PF00885">
    <property type="entry name" value="DMRL_synthase"/>
    <property type="match status" value="1"/>
</dbReference>
<dbReference type="SUPFAM" id="SSF52121">
    <property type="entry name" value="Lumazine synthase"/>
    <property type="match status" value="1"/>
</dbReference>
<reference key="1">
    <citation type="journal article" date="2004" name="Nucleic Acids Res.">
        <title>Unique features revealed by the genome sequence of Acinetobacter sp. ADP1, a versatile and naturally transformation competent bacterium.</title>
        <authorList>
            <person name="Barbe V."/>
            <person name="Vallenet D."/>
            <person name="Fonknechten N."/>
            <person name="Kreimeyer A."/>
            <person name="Oztas S."/>
            <person name="Labarre L."/>
            <person name="Cruveiller S."/>
            <person name="Robert C."/>
            <person name="Duprat S."/>
            <person name="Wincker P."/>
            <person name="Ornston L.N."/>
            <person name="Weissenbach J."/>
            <person name="Marliere P."/>
            <person name="Cohen G.N."/>
            <person name="Medigue C."/>
        </authorList>
    </citation>
    <scope>NUCLEOTIDE SEQUENCE [LARGE SCALE GENOMIC DNA]</scope>
    <source>
        <strain>ATCC 33305 / BD413 / ADP1</strain>
    </source>
</reference>